<protein>
    <recommendedName>
        <fullName evidence="1">Elongation factor P</fullName>
        <shortName evidence="1">EF-P</shortName>
    </recommendedName>
</protein>
<comment type="function">
    <text evidence="1">Involved in peptide bond synthesis. Stimulates efficient translation and peptide-bond synthesis on native or reconstituted 70S ribosomes in vitro. Probably functions indirectly by altering the affinity of the ribosome for aminoacyl-tRNA, thus increasing their reactivity as acceptors for peptidyl transferase.</text>
</comment>
<comment type="pathway">
    <text evidence="1">Protein biosynthesis; polypeptide chain elongation.</text>
</comment>
<comment type="subcellular location">
    <subcellularLocation>
        <location evidence="1">Cytoplasm</location>
    </subcellularLocation>
</comment>
<comment type="similarity">
    <text evidence="1">Belongs to the elongation factor P family.</text>
</comment>
<evidence type="ECO:0000255" key="1">
    <source>
        <dbReference type="HAMAP-Rule" id="MF_00141"/>
    </source>
</evidence>
<accession>Q5F856</accession>
<gene>
    <name evidence="1" type="primary">efp</name>
    <name type="ordered locus">NGO_0936</name>
</gene>
<proteinExistence type="inferred from homology"/>
<dbReference type="EMBL" id="AE004969">
    <property type="protein sequence ID" value="AAW89631.1"/>
    <property type="molecule type" value="Genomic_DNA"/>
</dbReference>
<dbReference type="RefSeq" id="WP_002219406.1">
    <property type="nucleotide sequence ID" value="NC_002946.2"/>
</dbReference>
<dbReference type="RefSeq" id="YP_208043.1">
    <property type="nucleotide sequence ID" value="NC_002946.2"/>
</dbReference>
<dbReference type="SMR" id="Q5F856"/>
<dbReference type="STRING" id="242231.NGO_0936"/>
<dbReference type="GeneID" id="86928945"/>
<dbReference type="KEGG" id="ngo:NGO_0936"/>
<dbReference type="PATRIC" id="fig|242231.10.peg.1098"/>
<dbReference type="HOGENOM" id="CLU_074944_2_1_4"/>
<dbReference type="UniPathway" id="UPA00345"/>
<dbReference type="PRO" id="PR:Q5F856"/>
<dbReference type="Proteomes" id="UP000000535">
    <property type="component" value="Chromosome"/>
</dbReference>
<dbReference type="GO" id="GO:0005737">
    <property type="term" value="C:cytoplasm"/>
    <property type="evidence" value="ECO:0007669"/>
    <property type="project" value="UniProtKB-SubCell"/>
</dbReference>
<dbReference type="GO" id="GO:0003746">
    <property type="term" value="F:translation elongation factor activity"/>
    <property type="evidence" value="ECO:0007669"/>
    <property type="project" value="UniProtKB-UniRule"/>
</dbReference>
<dbReference type="GO" id="GO:0043043">
    <property type="term" value="P:peptide biosynthetic process"/>
    <property type="evidence" value="ECO:0007669"/>
    <property type="project" value="InterPro"/>
</dbReference>
<dbReference type="CDD" id="cd04470">
    <property type="entry name" value="S1_EF-P_repeat_1"/>
    <property type="match status" value="1"/>
</dbReference>
<dbReference type="CDD" id="cd05794">
    <property type="entry name" value="S1_EF-P_repeat_2"/>
    <property type="match status" value="1"/>
</dbReference>
<dbReference type="FunFam" id="2.30.30.30:FF:000003">
    <property type="entry name" value="Elongation factor P"/>
    <property type="match status" value="1"/>
</dbReference>
<dbReference type="FunFam" id="2.40.50.140:FF:000004">
    <property type="entry name" value="Elongation factor P"/>
    <property type="match status" value="1"/>
</dbReference>
<dbReference type="FunFam" id="2.40.50.140:FF:000009">
    <property type="entry name" value="Elongation factor P"/>
    <property type="match status" value="1"/>
</dbReference>
<dbReference type="Gene3D" id="2.30.30.30">
    <property type="match status" value="1"/>
</dbReference>
<dbReference type="Gene3D" id="2.40.50.140">
    <property type="entry name" value="Nucleic acid-binding proteins"/>
    <property type="match status" value="2"/>
</dbReference>
<dbReference type="HAMAP" id="MF_00141">
    <property type="entry name" value="EF_P"/>
    <property type="match status" value="1"/>
</dbReference>
<dbReference type="InterPro" id="IPR015365">
    <property type="entry name" value="Elong-fact-P_C"/>
</dbReference>
<dbReference type="InterPro" id="IPR012340">
    <property type="entry name" value="NA-bd_OB-fold"/>
</dbReference>
<dbReference type="InterPro" id="IPR014722">
    <property type="entry name" value="Rib_uL2_dom2"/>
</dbReference>
<dbReference type="InterPro" id="IPR020599">
    <property type="entry name" value="Transl_elong_fac_P/YeiP"/>
</dbReference>
<dbReference type="InterPro" id="IPR013185">
    <property type="entry name" value="Transl_elong_KOW-like"/>
</dbReference>
<dbReference type="InterPro" id="IPR001059">
    <property type="entry name" value="Transl_elong_P/YeiP_cen"/>
</dbReference>
<dbReference type="InterPro" id="IPR011768">
    <property type="entry name" value="Transl_elongation_fac_P"/>
</dbReference>
<dbReference type="InterPro" id="IPR008991">
    <property type="entry name" value="Translation_prot_SH3-like_sf"/>
</dbReference>
<dbReference type="NCBIfam" id="TIGR00038">
    <property type="entry name" value="efp"/>
    <property type="match status" value="1"/>
</dbReference>
<dbReference type="NCBIfam" id="NF001810">
    <property type="entry name" value="PRK00529.1"/>
    <property type="match status" value="1"/>
</dbReference>
<dbReference type="PANTHER" id="PTHR30053">
    <property type="entry name" value="ELONGATION FACTOR P"/>
    <property type="match status" value="1"/>
</dbReference>
<dbReference type="PANTHER" id="PTHR30053:SF12">
    <property type="entry name" value="ELONGATION FACTOR P (EF-P) FAMILY PROTEIN"/>
    <property type="match status" value="1"/>
</dbReference>
<dbReference type="Pfam" id="PF01132">
    <property type="entry name" value="EFP"/>
    <property type="match status" value="1"/>
</dbReference>
<dbReference type="Pfam" id="PF08207">
    <property type="entry name" value="EFP_N"/>
    <property type="match status" value="1"/>
</dbReference>
<dbReference type="Pfam" id="PF09285">
    <property type="entry name" value="Elong-fact-P_C"/>
    <property type="match status" value="1"/>
</dbReference>
<dbReference type="PIRSF" id="PIRSF005901">
    <property type="entry name" value="EF-P"/>
    <property type="match status" value="1"/>
</dbReference>
<dbReference type="SMART" id="SM01185">
    <property type="entry name" value="EFP"/>
    <property type="match status" value="1"/>
</dbReference>
<dbReference type="SMART" id="SM00841">
    <property type="entry name" value="Elong-fact-P_C"/>
    <property type="match status" value="1"/>
</dbReference>
<dbReference type="SUPFAM" id="SSF50249">
    <property type="entry name" value="Nucleic acid-binding proteins"/>
    <property type="match status" value="2"/>
</dbReference>
<dbReference type="SUPFAM" id="SSF50104">
    <property type="entry name" value="Translation proteins SH3-like domain"/>
    <property type="match status" value="1"/>
</dbReference>
<organism>
    <name type="scientific">Neisseria gonorrhoeae (strain ATCC 700825 / FA 1090)</name>
    <dbReference type="NCBI Taxonomy" id="242231"/>
    <lineage>
        <taxon>Bacteria</taxon>
        <taxon>Pseudomonadati</taxon>
        <taxon>Pseudomonadota</taxon>
        <taxon>Betaproteobacteria</taxon>
        <taxon>Neisseriales</taxon>
        <taxon>Neisseriaceae</taxon>
        <taxon>Neisseria</taxon>
    </lineage>
</organism>
<sequence length="186" mass="20880">MKTAQELRAGNVFMVGNDPMVVQKTEYIKGGRSSAKVSMKLKNLLTGAASETIYKADDKFDVVILSRKNCTYSYFADPMYVFMDEEFNQYEIEADNIGDALKFIVDGMEDQCEVTFYEGNPISVELPTIIVREVEYTEPAVKGDTSGKVMKTARLVGGTEIQVMSYIENGDKVEIDTRTGEFRKRA</sequence>
<name>EFP_NEIG1</name>
<keyword id="KW-0963">Cytoplasm</keyword>
<keyword id="KW-0251">Elongation factor</keyword>
<keyword id="KW-0648">Protein biosynthesis</keyword>
<keyword id="KW-1185">Reference proteome</keyword>
<reference key="1">
    <citation type="submission" date="2003-03" db="EMBL/GenBank/DDBJ databases">
        <title>The complete genome sequence of Neisseria gonorrhoeae.</title>
        <authorList>
            <person name="Lewis L.A."/>
            <person name="Gillaspy A.F."/>
            <person name="McLaughlin R.E."/>
            <person name="Gipson M."/>
            <person name="Ducey T.F."/>
            <person name="Ownbey T."/>
            <person name="Hartman K."/>
            <person name="Nydick C."/>
            <person name="Carson M.B."/>
            <person name="Vaughn J."/>
            <person name="Thomson C."/>
            <person name="Song L."/>
            <person name="Lin S."/>
            <person name="Yuan X."/>
            <person name="Najar F."/>
            <person name="Zhan M."/>
            <person name="Ren Q."/>
            <person name="Zhu H."/>
            <person name="Qi S."/>
            <person name="Kenton S.M."/>
            <person name="Lai H."/>
            <person name="White J.D."/>
            <person name="Clifton S."/>
            <person name="Roe B.A."/>
            <person name="Dyer D.W."/>
        </authorList>
    </citation>
    <scope>NUCLEOTIDE SEQUENCE [LARGE SCALE GENOMIC DNA]</scope>
    <source>
        <strain>ATCC 700825 / FA 1090</strain>
    </source>
</reference>
<feature type="chain" id="PRO_0000094293" description="Elongation factor P">
    <location>
        <begin position="1"/>
        <end position="186"/>
    </location>
</feature>